<feature type="chain" id="PRO_0000125257" description="Large ribosomal subunit protein uL22">
    <location>
        <begin position="1"/>
        <end position="311"/>
    </location>
</feature>
<sequence length="311" mass="35389">MTNKVIQRNIHISHRKASLVIDLVRNKPVHEAIRILSNTPKKFAPIVLKLLNSAISNVQHNSKDMDPSKLYIYKIVANQGPTMKRTLPRAKGSADQLFKRTTHLEIVLSDDVNEREKELAAIKAKKSKKPLAVEPIAKVETKKVAKPSKVEIKPVEKDENVDPELLKREQQVLKVVEKTASQKEEETTETIMISTSPKNAQVLFDDLEKNVIFYKTTPINKVLRVLVYVTSPTKKVVGEFDLESVEIGAISSIWRKYSKQSVISKKEYDAYYEGKDKAHALVSKKAYKYRNPKDLSEYNMTKGPSGFQYLK</sequence>
<evidence type="ECO:0000250" key="1"/>
<evidence type="ECO:0000305" key="2"/>
<proteinExistence type="inferred from homology"/>
<dbReference type="EMBL" id="AF222894">
    <property type="protein sequence ID" value="AAF30645.1"/>
    <property type="molecule type" value="Genomic_DNA"/>
</dbReference>
<dbReference type="RefSeq" id="WP_006688968.1">
    <property type="nucleotide sequence ID" value="NC_002162.1"/>
</dbReference>
<dbReference type="SMR" id="Q9PQQ5"/>
<dbReference type="STRING" id="273119.UU236"/>
<dbReference type="EnsemblBacteria" id="AAF30645">
    <property type="protein sequence ID" value="AAF30645"/>
    <property type="gene ID" value="UU236"/>
</dbReference>
<dbReference type="GeneID" id="29672595"/>
<dbReference type="KEGG" id="uur:UU236"/>
<dbReference type="eggNOG" id="COG0091">
    <property type="taxonomic scope" value="Bacteria"/>
</dbReference>
<dbReference type="eggNOG" id="COG4933">
    <property type="taxonomic scope" value="Bacteria"/>
</dbReference>
<dbReference type="HOGENOM" id="CLU_894135_0_0_14"/>
<dbReference type="OrthoDB" id="9805969at2"/>
<dbReference type="Proteomes" id="UP000000423">
    <property type="component" value="Chromosome"/>
</dbReference>
<dbReference type="GO" id="GO:0022625">
    <property type="term" value="C:cytosolic large ribosomal subunit"/>
    <property type="evidence" value="ECO:0007669"/>
    <property type="project" value="TreeGrafter"/>
</dbReference>
<dbReference type="GO" id="GO:0019843">
    <property type="term" value="F:rRNA binding"/>
    <property type="evidence" value="ECO:0007669"/>
    <property type="project" value="UniProtKB-UniRule"/>
</dbReference>
<dbReference type="GO" id="GO:0003735">
    <property type="term" value="F:structural constituent of ribosome"/>
    <property type="evidence" value="ECO:0007669"/>
    <property type="project" value="InterPro"/>
</dbReference>
<dbReference type="GO" id="GO:0006412">
    <property type="term" value="P:translation"/>
    <property type="evidence" value="ECO:0007669"/>
    <property type="project" value="UniProtKB-UniRule"/>
</dbReference>
<dbReference type="CDD" id="cd00336">
    <property type="entry name" value="Ribosomal_L22"/>
    <property type="match status" value="1"/>
</dbReference>
<dbReference type="Gene3D" id="2.30.130.30">
    <property type="entry name" value="Hypothetical protein"/>
    <property type="match status" value="1"/>
</dbReference>
<dbReference type="Gene3D" id="3.90.470.10">
    <property type="entry name" value="Ribosomal protein L22/L17"/>
    <property type="match status" value="1"/>
</dbReference>
<dbReference type="HAMAP" id="MF_01331_B">
    <property type="entry name" value="Ribosomal_uL22_B"/>
    <property type="match status" value="1"/>
</dbReference>
<dbReference type="InterPro" id="IPR001063">
    <property type="entry name" value="Ribosomal_uL22"/>
</dbReference>
<dbReference type="InterPro" id="IPR005727">
    <property type="entry name" value="Ribosomal_uL22_bac/chlpt-type"/>
</dbReference>
<dbReference type="InterPro" id="IPR047867">
    <property type="entry name" value="Ribosomal_uL22_bac/org-type"/>
</dbReference>
<dbReference type="InterPro" id="IPR018260">
    <property type="entry name" value="Ribosomal_uL22_CS"/>
</dbReference>
<dbReference type="InterPro" id="IPR036394">
    <property type="entry name" value="Ribosomal_uL22_sf"/>
</dbReference>
<dbReference type="NCBIfam" id="NF008917">
    <property type="entry name" value="PRK12279.1"/>
    <property type="match status" value="1"/>
</dbReference>
<dbReference type="NCBIfam" id="TIGR01044">
    <property type="entry name" value="rplV_bact"/>
    <property type="match status" value="1"/>
</dbReference>
<dbReference type="PANTHER" id="PTHR13501">
    <property type="entry name" value="CHLOROPLAST 50S RIBOSOMAL PROTEIN L22-RELATED"/>
    <property type="match status" value="1"/>
</dbReference>
<dbReference type="PANTHER" id="PTHR13501:SF8">
    <property type="entry name" value="LARGE RIBOSOMAL SUBUNIT PROTEIN UL22M"/>
    <property type="match status" value="1"/>
</dbReference>
<dbReference type="Pfam" id="PF00237">
    <property type="entry name" value="Ribosomal_L22"/>
    <property type="match status" value="1"/>
</dbReference>
<dbReference type="SUPFAM" id="SSF54843">
    <property type="entry name" value="Ribosomal protein L22"/>
    <property type="match status" value="1"/>
</dbReference>
<dbReference type="PROSITE" id="PS00464">
    <property type="entry name" value="RIBOSOMAL_L22"/>
    <property type="match status" value="1"/>
</dbReference>
<protein>
    <recommendedName>
        <fullName evidence="2">Large ribosomal subunit protein uL22</fullName>
    </recommendedName>
    <alternativeName>
        <fullName>50S ribosomal protein L22</fullName>
    </alternativeName>
</protein>
<name>RL22_UREPA</name>
<accession>Q9PQQ5</accession>
<keyword id="KW-1185">Reference proteome</keyword>
<keyword id="KW-0687">Ribonucleoprotein</keyword>
<keyword id="KW-0689">Ribosomal protein</keyword>
<keyword id="KW-0694">RNA-binding</keyword>
<keyword id="KW-0699">rRNA-binding</keyword>
<comment type="function">
    <text evidence="1">This protein binds specifically to 23S rRNA; its binding is stimulated by other ribosomal proteins, e.g. L4, L17, and L20. It is important during the early stages of 50S assembly. It makes multiple contacts with different domains of the 23S rRNA in the assembled 50S subunit and ribosome (By similarity).</text>
</comment>
<comment type="function">
    <text evidence="1">The globular domain of the protein is located near the polypeptide exit tunnel on the outside of the subunit, while an extended beta-hairpin is found that lines the wall of the exit tunnel in the center of the 70S ribosome.</text>
</comment>
<comment type="subunit">
    <text evidence="1">Part of the 50S ribosomal subunit.</text>
</comment>
<comment type="similarity">
    <text evidence="2">Belongs to the universal ribosomal protein uL22 family.</text>
</comment>
<gene>
    <name type="primary">rplV</name>
    <name type="synonym">rpl22</name>
    <name type="ordered locus">UU236</name>
</gene>
<organism>
    <name type="scientific">Ureaplasma parvum serovar 3 (strain ATCC 700970)</name>
    <dbReference type="NCBI Taxonomy" id="273119"/>
    <lineage>
        <taxon>Bacteria</taxon>
        <taxon>Bacillati</taxon>
        <taxon>Mycoplasmatota</taxon>
        <taxon>Mycoplasmoidales</taxon>
        <taxon>Mycoplasmoidaceae</taxon>
        <taxon>Ureaplasma</taxon>
    </lineage>
</organism>
<reference key="1">
    <citation type="journal article" date="2000" name="Nature">
        <title>The complete sequence of the mucosal pathogen Ureaplasma urealyticum.</title>
        <authorList>
            <person name="Glass J.I."/>
            <person name="Lefkowitz E.J."/>
            <person name="Glass J.S."/>
            <person name="Heiner C.R."/>
            <person name="Chen E.Y."/>
            <person name="Cassell G.H."/>
        </authorList>
    </citation>
    <scope>NUCLEOTIDE SEQUENCE [LARGE SCALE GENOMIC DNA]</scope>
    <source>
        <strain>ATCC 700970</strain>
    </source>
</reference>